<organism>
    <name type="scientific">Salmonella enteritidis PT4 (strain P125109)</name>
    <dbReference type="NCBI Taxonomy" id="550537"/>
    <lineage>
        <taxon>Bacteria</taxon>
        <taxon>Pseudomonadati</taxon>
        <taxon>Pseudomonadota</taxon>
        <taxon>Gammaproteobacteria</taxon>
        <taxon>Enterobacterales</taxon>
        <taxon>Enterobacteriaceae</taxon>
        <taxon>Salmonella</taxon>
    </lineage>
</organism>
<protein>
    <recommendedName>
        <fullName evidence="1">4-hydroxy-2-oxo-heptane-1,7-dioate aldolase</fullName>
        <ecNumber evidence="1">4.1.2.52</ecNumber>
    </recommendedName>
    <alternativeName>
        <fullName evidence="1">2,4-dihydroxyhept-2-ene-1,7-dioic acid aldolase</fullName>
        <shortName evidence="1">HHED aldolase</shortName>
    </alternativeName>
    <alternativeName>
        <fullName evidence="1">4-hydroxy-2-ketoheptane-1,7-dioate aldolase</fullName>
        <shortName evidence="1">HKHD aldolase</shortName>
    </alternativeName>
</protein>
<proteinExistence type="inferred from homology"/>
<feature type="chain" id="PRO_1000140422" description="4-hydroxy-2-oxo-heptane-1,7-dioate aldolase">
    <location>
        <begin position="1"/>
        <end position="263"/>
    </location>
</feature>
<feature type="active site" description="Proton acceptor" evidence="1">
    <location>
        <position position="45"/>
    </location>
</feature>
<feature type="binding site" evidence="1">
    <location>
        <position position="147"/>
    </location>
    <ligand>
        <name>substrate</name>
    </ligand>
</feature>
<feature type="binding site" evidence="1">
    <location>
        <position position="149"/>
    </location>
    <ligand>
        <name>a divalent metal cation</name>
        <dbReference type="ChEBI" id="CHEBI:60240"/>
    </ligand>
</feature>
<feature type="binding site" evidence="1">
    <location>
        <position position="174"/>
    </location>
    <ligand>
        <name>substrate</name>
    </ligand>
</feature>
<feature type="binding site" evidence="1">
    <location>
        <position position="175"/>
    </location>
    <ligand>
        <name>a divalent metal cation</name>
        <dbReference type="ChEBI" id="CHEBI:60240"/>
    </ligand>
</feature>
<feature type="binding site" evidence="1">
    <location>
        <position position="175"/>
    </location>
    <ligand>
        <name>substrate</name>
    </ligand>
</feature>
<feature type="site" description="Transition state stabilizer" evidence="1">
    <location>
        <position position="70"/>
    </location>
</feature>
<feature type="site" description="Increases basicity of active site His" evidence="1">
    <location>
        <position position="84"/>
    </location>
</feature>
<dbReference type="EC" id="4.1.2.52" evidence="1"/>
<dbReference type="EMBL" id="AM933172">
    <property type="protein sequence ID" value="CAR32552.1"/>
    <property type="molecule type" value="Genomic_DNA"/>
</dbReference>
<dbReference type="RefSeq" id="WP_000785061.1">
    <property type="nucleotide sequence ID" value="NC_011294.1"/>
</dbReference>
<dbReference type="SMR" id="B5R043"/>
<dbReference type="KEGG" id="set:SEN0970"/>
<dbReference type="HOGENOM" id="CLU_059964_1_0_6"/>
<dbReference type="UniPathway" id="UPA00208">
    <property type="reaction ID" value="UER00422"/>
</dbReference>
<dbReference type="Proteomes" id="UP000000613">
    <property type="component" value="Chromosome"/>
</dbReference>
<dbReference type="GO" id="GO:0005737">
    <property type="term" value="C:cytoplasm"/>
    <property type="evidence" value="ECO:0007669"/>
    <property type="project" value="TreeGrafter"/>
</dbReference>
<dbReference type="GO" id="GO:0043863">
    <property type="term" value="F:4-hydroxy-2-ketopimelate aldolase activity"/>
    <property type="evidence" value="ECO:0007669"/>
    <property type="project" value="RHEA"/>
</dbReference>
<dbReference type="GO" id="GO:0046872">
    <property type="term" value="F:metal ion binding"/>
    <property type="evidence" value="ECO:0007669"/>
    <property type="project" value="UniProtKB-UniRule"/>
</dbReference>
<dbReference type="GO" id="GO:1901023">
    <property type="term" value="P:4-hydroxyphenylacetate catabolic process"/>
    <property type="evidence" value="ECO:0007669"/>
    <property type="project" value="UniProtKB-UniRule"/>
</dbReference>
<dbReference type="GO" id="GO:0010124">
    <property type="term" value="P:phenylacetate catabolic process"/>
    <property type="evidence" value="ECO:0007669"/>
    <property type="project" value="InterPro"/>
</dbReference>
<dbReference type="FunFam" id="3.20.20.60:FF:000004">
    <property type="entry name" value="5-keto-4-deoxy-D-glucarate aldolase"/>
    <property type="match status" value="1"/>
</dbReference>
<dbReference type="Gene3D" id="3.20.20.60">
    <property type="entry name" value="Phosphoenolpyruvate-binding domains"/>
    <property type="match status" value="1"/>
</dbReference>
<dbReference type="HAMAP" id="MF_01292">
    <property type="entry name" value="HKHD_aldolase"/>
    <property type="match status" value="1"/>
</dbReference>
<dbReference type="InterPro" id="IPR005000">
    <property type="entry name" value="Aldolase/citrate-lyase_domain"/>
</dbReference>
<dbReference type="InterPro" id="IPR023701">
    <property type="entry name" value="HKHD_aldolase_ent"/>
</dbReference>
<dbReference type="InterPro" id="IPR012689">
    <property type="entry name" value="HpaI"/>
</dbReference>
<dbReference type="InterPro" id="IPR050251">
    <property type="entry name" value="HpcH-HpaI_aldolase"/>
</dbReference>
<dbReference type="InterPro" id="IPR015813">
    <property type="entry name" value="Pyrv/PenolPyrv_kinase-like_dom"/>
</dbReference>
<dbReference type="InterPro" id="IPR040442">
    <property type="entry name" value="Pyrv_kinase-like_dom_sf"/>
</dbReference>
<dbReference type="NCBIfam" id="TIGR02311">
    <property type="entry name" value="HpaI"/>
    <property type="match status" value="1"/>
</dbReference>
<dbReference type="PANTHER" id="PTHR30502">
    <property type="entry name" value="2-KETO-3-DEOXY-L-RHAMNONATE ALDOLASE"/>
    <property type="match status" value="1"/>
</dbReference>
<dbReference type="PANTHER" id="PTHR30502:SF0">
    <property type="entry name" value="PHOSPHOENOLPYRUVATE CARBOXYLASE FAMILY PROTEIN"/>
    <property type="match status" value="1"/>
</dbReference>
<dbReference type="Pfam" id="PF03328">
    <property type="entry name" value="HpcH_HpaI"/>
    <property type="match status" value="1"/>
</dbReference>
<dbReference type="SUPFAM" id="SSF51621">
    <property type="entry name" value="Phosphoenolpyruvate/pyruvate domain"/>
    <property type="match status" value="1"/>
</dbReference>
<reference key="1">
    <citation type="journal article" date="2008" name="Genome Res.">
        <title>Comparative genome analysis of Salmonella enteritidis PT4 and Salmonella gallinarum 287/91 provides insights into evolutionary and host adaptation pathways.</title>
        <authorList>
            <person name="Thomson N.R."/>
            <person name="Clayton D.J."/>
            <person name="Windhorst D."/>
            <person name="Vernikos G."/>
            <person name="Davidson S."/>
            <person name="Churcher C."/>
            <person name="Quail M.A."/>
            <person name="Stevens M."/>
            <person name="Jones M.A."/>
            <person name="Watson M."/>
            <person name="Barron A."/>
            <person name="Layton A."/>
            <person name="Pickard D."/>
            <person name="Kingsley R.A."/>
            <person name="Bignell A."/>
            <person name="Clark L."/>
            <person name="Harris B."/>
            <person name="Ormond D."/>
            <person name="Abdellah Z."/>
            <person name="Brooks K."/>
            <person name="Cherevach I."/>
            <person name="Chillingworth T."/>
            <person name="Woodward J."/>
            <person name="Norberczak H."/>
            <person name="Lord A."/>
            <person name="Arrowsmith C."/>
            <person name="Jagels K."/>
            <person name="Moule S."/>
            <person name="Mungall K."/>
            <person name="Saunders M."/>
            <person name="Whitehead S."/>
            <person name="Chabalgoity J.A."/>
            <person name="Maskell D."/>
            <person name="Humphreys T."/>
            <person name="Roberts M."/>
            <person name="Barrow P.A."/>
            <person name="Dougan G."/>
            <person name="Parkhill J."/>
        </authorList>
    </citation>
    <scope>NUCLEOTIDE SEQUENCE [LARGE SCALE GENOMIC DNA]</scope>
    <source>
        <strain>P125109</strain>
    </source>
</reference>
<name>HPCH_SALEP</name>
<evidence type="ECO:0000255" key="1">
    <source>
        <dbReference type="HAMAP-Rule" id="MF_01292"/>
    </source>
</evidence>
<gene>
    <name evidence="1" type="primary">hpcH</name>
    <name evidence="1" type="synonym">hpaI</name>
    <name type="ordered locus">SEN0970</name>
</gene>
<comment type="function">
    <text evidence="1">Catalyzes the reversible retro-aldol cleavage of 4-hydroxy-2-ketoheptane-1,7-dioate (HKHD) to pyruvate and succinic semialdehyde.</text>
</comment>
<comment type="catalytic activity">
    <reaction evidence="1">
        <text>4-hydroxy-2-oxoheptanedioate = succinate semialdehyde + pyruvate</text>
        <dbReference type="Rhea" id="RHEA:25788"/>
        <dbReference type="ChEBI" id="CHEBI:15361"/>
        <dbReference type="ChEBI" id="CHEBI:57706"/>
        <dbReference type="ChEBI" id="CHEBI:73036"/>
        <dbReference type="EC" id="4.1.2.52"/>
    </reaction>
</comment>
<comment type="cofactor">
    <cofactor evidence="1">
        <name>a divalent metal cation</name>
        <dbReference type="ChEBI" id="CHEBI:60240"/>
    </cofactor>
    <text evidence="1">Binds 1 divalent metal cation per subunit.</text>
</comment>
<comment type="pathway">
    <text evidence="1">Aromatic compound metabolism; 4-hydroxyphenylacetate degradation; pyruvate and succinate semialdehyde from 4-hydroxyphenylacetate: step 7/7.</text>
</comment>
<comment type="subunit">
    <text evidence="1">Homohexamer; trimer of dimers.</text>
</comment>
<comment type="similarity">
    <text evidence="1">Belongs to the HpcH/HpaI aldolase family.</text>
</comment>
<sequence>MKNAFKDALKAGRPQIGLWLGLANSYSAELLAGAGFDWLLIDGEHAPNNVQTVLTQLQAIAPYPSQPVVRPSWNDPVQIKQLLDVGAQTLLIPMVQNADEARNAVAATRYPPAGIRGVGSALARASRWNRIPDYLHQANDAMCVLVQIETREAMSNLASILDVDGIDGVFIGPADLSADMGFAGNPQHPEVQAAIENAIVQIRAAGKAPGILMANEALAKRYLELGALFVAVGVDTTLLARGAEALAARFGAEKKLSGASGVY</sequence>
<accession>B5R043</accession>
<keyword id="KW-0058">Aromatic hydrocarbons catabolism</keyword>
<keyword id="KW-0456">Lyase</keyword>
<keyword id="KW-0479">Metal-binding</keyword>